<keyword id="KW-0963">Cytoplasm</keyword>
<keyword id="KW-0275">Fatty acid biosynthesis</keyword>
<keyword id="KW-0276">Fatty acid metabolism</keyword>
<keyword id="KW-0444">Lipid biosynthesis</keyword>
<keyword id="KW-0443">Lipid metabolism</keyword>
<keyword id="KW-0460">Magnesium</keyword>
<keyword id="KW-0479">Metal-binding</keyword>
<keyword id="KW-0808">Transferase</keyword>
<sequence>MAIYGIGTDVVQISRIAAVLERTGGRFAEKVLGPDELRVFHARRARSEARGIAFLATRFSAKEAFSKAIGLGMHWPMTWRALQTLNQRSGEPYVVASGELADWLAARGITARVTVSDERDYAVSFVVAETDVAPPPAPAPVSRTTP</sequence>
<name>ACPS_BURA4</name>
<dbReference type="EC" id="2.7.8.7" evidence="1"/>
<dbReference type="EMBL" id="CP001025">
    <property type="protein sequence ID" value="ACB63509.1"/>
    <property type="molecule type" value="Genomic_DNA"/>
</dbReference>
<dbReference type="RefSeq" id="WP_006751874.1">
    <property type="nucleotide sequence ID" value="NC_010551.1"/>
</dbReference>
<dbReference type="SMR" id="B1YVM8"/>
<dbReference type="KEGG" id="bac:BamMC406_1018"/>
<dbReference type="HOGENOM" id="CLU_089696_3_1_4"/>
<dbReference type="OrthoDB" id="517356at2"/>
<dbReference type="Proteomes" id="UP000001680">
    <property type="component" value="Chromosome 1"/>
</dbReference>
<dbReference type="GO" id="GO:0005737">
    <property type="term" value="C:cytoplasm"/>
    <property type="evidence" value="ECO:0007669"/>
    <property type="project" value="UniProtKB-SubCell"/>
</dbReference>
<dbReference type="GO" id="GO:0008897">
    <property type="term" value="F:holo-[acyl-carrier-protein] synthase activity"/>
    <property type="evidence" value="ECO:0007669"/>
    <property type="project" value="UniProtKB-UniRule"/>
</dbReference>
<dbReference type="GO" id="GO:0000287">
    <property type="term" value="F:magnesium ion binding"/>
    <property type="evidence" value="ECO:0007669"/>
    <property type="project" value="UniProtKB-UniRule"/>
</dbReference>
<dbReference type="GO" id="GO:0006633">
    <property type="term" value="P:fatty acid biosynthetic process"/>
    <property type="evidence" value="ECO:0007669"/>
    <property type="project" value="UniProtKB-UniRule"/>
</dbReference>
<dbReference type="Gene3D" id="3.90.470.20">
    <property type="entry name" value="4'-phosphopantetheinyl transferase domain"/>
    <property type="match status" value="1"/>
</dbReference>
<dbReference type="HAMAP" id="MF_00101">
    <property type="entry name" value="AcpS"/>
    <property type="match status" value="1"/>
</dbReference>
<dbReference type="InterPro" id="IPR008278">
    <property type="entry name" value="4-PPantetheinyl_Trfase_dom"/>
</dbReference>
<dbReference type="InterPro" id="IPR037143">
    <property type="entry name" value="4-PPantetheinyl_Trfase_dom_sf"/>
</dbReference>
<dbReference type="InterPro" id="IPR002582">
    <property type="entry name" value="ACPS"/>
</dbReference>
<dbReference type="InterPro" id="IPR004568">
    <property type="entry name" value="Ppantetheine-prot_Trfase_dom"/>
</dbReference>
<dbReference type="NCBIfam" id="TIGR00516">
    <property type="entry name" value="acpS"/>
    <property type="match status" value="1"/>
</dbReference>
<dbReference type="NCBIfam" id="TIGR00556">
    <property type="entry name" value="pantethn_trn"/>
    <property type="match status" value="1"/>
</dbReference>
<dbReference type="Pfam" id="PF01648">
    <property type="entry name" value="ACPS"/>
    <property type="match status" value="1"/>
</dbReference>
<dbReference type="SUPFAM" id="SSF56214">
    <property type="entry name" value="4'-phosphopantetheinyl transferase"/>
    <property type="match status" value="1"/>
</dbReference>
<evidence type="ECO:0000255" key="1">
    <source>
        <dbReference type="HAMAP-Rule" id="MF_00101"/>
    </source>
</evidence>
<accession>B1YVM8</accession>
<comment type="function">
    <text evidence="1">Transfers the 4'-phosphopantetheine moiety from coenzyme A to a Ser of acyl-carrier-protein.</text>
</comment>
<comment type="catalytic activity">
    <reaction evidence="1">
        <text>apo-[ACP] + CoA = holo-[ACP] + adenosine 3',5'-bisphosphate + H(+)</text>
        <dbReference type="Rhea" id="RHEA:12068"/>
        <dbReference type="Rhea" id="RHEA-COMP:9685"/>
        <dbReference type="Rhea" id="RHEA-COMP:9690"/>
        <dbReference type="ChEBI" id="CHEBI:15378"/>
        <dbReference type="ChEBI" id="CHEBI:29999"/>
        <dbReference type="ChEBI" id="CHEBI:57287"/>
        <dbReference type="ChEBI" id="CHEBI:58343"/>
        <dbReference type="ChEBI" id="CHEBI:64479"/>
        <dbReference type="EC" id="2.7.8.7"/>
    </reaction>
</comment>
<comment type="cofactor">
    <cofactor evidence="1">
        <name>Mg(2+)</name>
        <dbReference type="ChEBI" id="CHEBI:18420"/>
    </cofactor>
</comment>
<comment type="subcellular location">
    <subcellularLocation>
        <location evidence="1">Cytoplasm</location>
    </subcellularLocation>
</comment>
<comment type="similarity">
    <text evidence="1">Belongs to the P-Pant transferase superfamily. AcpS family.</text>
</comment>
<gene>
    <name evidence="1" type="primary">acpS</name>
    <name type="ordered locus">BamMC406_1018</name>
</gene>
<feature type="chain" id="PRO_1000093858" description="Holo-[acyl-carrier-protein] synthase">
    <location>
        <begin position="1"/>
        <end position="146"/>
    </location>
</feature>
<feature type="binding site" evidence="1">
    <location>
        <position position="9"/>
    </location>
    <ligand>
        <name>Mg(2+)</name>
        <dbReference type="ChEBI" id="CHEBI:18420"/>
    </ligand>
</feature>
<feature type="binding site" evidence="1">
    <location>
        <position position="63"/>
    </location>
    <ligand>
        <name>Mg(2+)</name>
        <dbReference type="ChEBI" id="CHEBI:18420"/>
    </ligand>
</feature>
<proteinExistence type="inferred from homology"/>
<protein>
    <recommendedName>
        <fullName evidence="1">Holo-[acyl-carrier-protein] synthase</fullName>
        <shortName evidence="1">Holo-ACP synthase</shortName>
        <ecNumber evidence="1">2.7.8.7</ecNumber>
    </recommendedName>
    <alternativeName>
        <fullName evidence="1">4'-phosphopantetheinyl transferase AcpS</fullName>
    </alternativeName>
</protein>
<organism>
    <name type="scientific">Burkholderia ambifaria (strain MC40-6)</name>
    <dbReference type="NCBI Taxonomy" id="398577"/>
    <lineage>
        <taxon>Bacteria</taxon>
        <taxon>Pseudomonadati</taxon>
        <taxon>Pseudomonadota</taxon>
        <taxon>Betaproteobacteria</taxon>
        <taxon>Burkholderiales</taxon>
        <taxon>Burkholderiaceae</taxon>
        <taxon>Burkholderia</taxon>
        <taxon>Burkholderia cepacia complex</taxon>
    </lineage>
</organism>
<reference key="1">
    <citation type="submission" date="2008-04" db="EMBL/GenBank/DDBJ databases">
        <title>Complete sequence of chromosome 1 of Burkholderia ambifaria MC40-6.</title>
        <authorList>
            <person name="Copeland A."/>
            <person name="Lucas S."/>
            <person name="Lapidus A."/>
            <person name="Glavina del Rio T."/>
            <person name="Dalin E."/>
            <person name="Tice H."/>
            <person name="Pitluck S."/>
            <person name="Chain P."/>
            <person name="Malfatti S."/>
            <person name="Shin M."/>
            <person name="Vergez L."/>
            <person name="Lang D."/>
            <person name="Schmutz J."/>
            <person name="Larimer F."/>
            <person name="Land M."/>
            <person name="Hauser L."/>
            <person name="Kyrpides N."/>
            <person name="Lykidis A."/>
            <person name="Ramette A."/>
            <person name="Konstantinidis K."/>
            <person name="Tiedje J."/>
            <person name="Richardson P."/>
        </authorList>
    </citation>
    <scope>NUCLEOTIDE SEQUENCE [LARGE SCALE GENOMIC DNA]</scope>
    <source>
        <strain>MC40-6</strain>
    </source>
</reference>